<organism>
    <name type="scientific">Aromatoleum aromaticum (strain DSM 19018 / LMG 30748 / EbN1)</name>
    <name type="common">Azoarcus sp. (strain EbN1)</name>
    <dbReference type="NCBI Taxonomy" id="76114"/>
    <lineage>
        <taxon>Bacteria</taxon>
        <taxon>Pseudomonadati</taxon>
        <taxon>Pseudomonadota</taxon>
        <taxon>Betaproteobacteria</taxon>
        <taxon>Rhodocyclales</taxon>
        <taxon>Rhodocyclaceae</taxon>
        <taxon>Aromatoleum</taxon>
    </lineage>
</organism>
<keyword id="KW-0963">Cytoplasm</keyword>
<keyword id="KW-0227">DNA damage</keyword>
<keyword id="KW-0233">DNA recombination</keyword>
<keyword id="KW-0234">DNA repair</keyword>
<keyword id="KW-0238">DNA-binding</keyword>
<keyword id="KW-0255">Endonuclease</keyword>
<keyword id="KW-0378">Hydrolase</keyword>
<keyword id="KW-0460">Magnesium</keyword>
<keyword id="KW-0479">Metal-binding</keyword>
<keyword id="KW-0540">Nuclease</keyword>
<keyword id="KW-1185">Reference proteome</keyword>
<dbReference type="EC" id="3.1.21.10" evidence="1"/>
<dbReference type="EMBL" id="CR555306">
    <property type="protein sequence ID" value="CAI08189.1"/>
    <property type="status" value="ALT_INIT"/>
    <property type="molecule type" value="Genomic_DNA"/>
</dbReference>
<dbReference type="RefSeq" id="WP_041647143.1">
    <property type="nucleotide sequence ID" value="NC_006513.1"/>
</dbReference>
<dbReference type="SMR" id="Q5P3C5"/>
<dbReference type="STRING" id="76114.ebA3657"/>
<dbReference type="KEGG" id="eba:ebA3657"/>
<dbReference type="eggNOG" id="COG0817">
    <property type="taxonomic scope" value="Bacteria"/>
</dbReference>
<dbReference type="HOGENOM" id="CLU_091257_2_1_4"/>
<dbReference type="OrthoDB" id="9805499at2"/>
<dbReference type="Proteomes" id="UP000006552">
    <property type="component" value="Chromosome"/>
</dbReference>
<dbReference type="GO" id="GO:0005737">
    <property type="term" value="C:cytoplasm"/>
    <property type="evidence" value="ECO:0007669"/>
    <property type="project" value="UniProtKB-SubCell"/>
</dbReference>
<dbReference type="GO" id="GO:0048476">
    <property type="term" value="C:Holliday junction resolvase complex"/>
    <property type="evidence" value="ECO:0007669"/>
    <property type="project" value="UniProtKB-UniRule"/>
</dbReference>
<dbReference type="GO" id="GO:0008821">
    <property type="term" value="F:crossover junction DNA endonuclease activity"/>
    <property type="evidence" value="ECO:0007669"/>
    <property type="project" value="UniProtKB-UniRule"/>
</dbReference>
<dbReference type="GO" id="GO:0003677">
    <property type="term" value="F:DNA binding"/>
    <property type="evidence" value="ECO:0007669"/>
    <property type="project" value="UniProtKB-KW"/>
</dbReference>
<dbReference type="GO" id="GO:0000287">
    <property type="term" value="F:magnesium ion binding"/>
    <property type="evidence" value="ECO:0007669"/>
    <property type="project" value="UniProtKB-UniRule"/>
</dbReference>
<dbReference type="GO" id="GO:0006310">
    <property type="term" value="P:DNA recombination"/>
    <property type="evidence" value="ECO:0007669"/>
    <property type="project" value="UniProtKB-UniRule"/>
</dbReference>
<dbReference type="GO" id="GO:0006281">
    <property type="term" value="P:DNA repair"/>
    <property type="evidence" value="ECO:0007669"/>
    <property type="project" value="UniProtKB-UniRule"/>
</dbReference>
<dbReference type="CDD" id="cd16962">
    <property type="entry name" value="RuvC"/>
    <property type="match status" value="1"/>
</dbReference>
<dbReference type="FunFam" id="3.30.420.10:FF:000002">
    <property type="entry name" value="Crossover junction endodeoxyribonuclease RuvC"/>
    <property type="match status" value="1"/>
</dbReference>
<dbReference type="Gene3D" id="3.30.420.10">
    <property type="entry name" value="Ribonuclease H-like superfamily/Ribonuclease H"/>
    <property type="match status" value="1"/>
</dbReference>
<dbReference type="HAMAP" id="MF_00034">
    <property type="entry name" value="RuvC"/>
    <property type="match status" value="1"/>
</dbReference>
<dbReference type="InterPro" id="IPR012337">
    <property type="entry name" value="RNaseH-like_sf"/>
</dbReference>
<dbReference type="InterPro" id="IPR036397">
    <property type="entry name" value="RNaseH_sf"/>
</dbReference>
<dbReference type="InterPro" id="IPR020563">
    <property type="entry name" value="X-over_junc_endoDNase_Mg_BS"/>
</dbReference>
<dbReference type="InterPro" id="IPR002176">
    <property type="entry name" value="X-over_junc_endoDNase_RuvC"/>
</dbReference>
<dbReference type="NCBIfam" id="TIGR00228">
    <property type="entry name" value="ruvC"/>
    <property type="match status" value="1"/>
</dbReference>
<dbReference type="PANTHER" id="PTHR30194">
    <property type="entry name" value="CROSSOVER JUNCTION ENDODEOXYRIBONUCLEASE RUVC"/>
    <property type="match status" value="1"/>
</dbReference>
<dbReference type="PANTHER" id="PTHR30194:SF3">
    <property type="entry name" value="CROSSOVER JUNCTION ENDODEOXYRIBONUCLEASE RUVC"/>
    <property type="match status" value="1"/>
</dbReference>
<dbReference type="Pfam" id="PF02075">
    <property type="entry name" value="RuvC"/>
    <property type="match status" value="1"/>
</dbReference>
<dbReference type="PRINTS" id="PR00696">
    <property type="entry name" value="RSOLVASERUVC"/>
</dbReference>
<dbReference type="SUPFAM" id="SSF53098">
    <property type="entry name" value="Ribonuclease H-like"/>
    <property type="match status" value="1"/>
</dbReference>
<dbReference type="PROSITE" id="PS01321">
    <property type="entry name" value="RUVC"/>
    <property type="match status" value="1"/>
</dbReference>
<proteinExistence type="inferred from homology"/>
<feature type="chain" id="PRO_0000225119" description="Crossover junction endodeoxyribonuclease RuvC">
    <location>
        <begin position="1"/>
        <end position="185"/>
    </location>
</feature>
<feature type="active site" evidence="1">
    <location>
        <position position="16"/>
    </location>
</feature>
<feature type="active site" evidence="1">
    <location>
        <position position="75"/>
    </location>
</feature>
<feature type="active site" evidence="1">
    <location>
        <position position="147"/>
    </location>
</feature>
<feature type="binding site" evidence="1">
    <location>
        <position position="16"/>
    </location>
    <ligand>
        <name>Mg(2+)</name>
        <dbReference type="ChEBI" id="CHEBI:18420"/>
        <label>1</label>
    </ligand>
</feature>
<feature type="binding site" evidence="1">
    <location>
        <position position="75"/>
    </location>
    <ligand>
        <name>Mg(2+)</name>
        <dbReference type="ChEBI" id="CHEBI:18420"/>
        <label>2</label>
    </ligand>
</feature>
<feature type="binding site" evidence="1">
    <location>
        <position position="147"/>
    </location>
    <ligand>
        <name>Mg(2+)</name>
        <dbReference type="ChEBI" id="CHEBI:18420"/>
        <label>1</label>
    </ligand>
</feature>
<accession>Q5P3C5</accession>
<protein>
    <recommendedName>
        <fullName evidence="1">Crossover junction endodeoxyribonuclease RuvC</fullName>
        <ecNumber evidence="1">3.1.21.10</ecNumber>
    </recommendedName>
    <alternativeName>
        <fullName evidence="1">Holliday junction nuclease RuvC</fullName>
    </alternativeName>
    <alternativeName>
        <fullName evidence="1">Holliday junction resolvase RuvC</fullName>
    </alternativeName>
</protein>
<comment type="function">
    <text evidence="1">The RuvA-RuvB-RuvC complex processes Holliday junction (HJ) DNA during genetic recombination and DNA repair. Endonuclease that resolves HJ intermediates. Cleaves cruciform DNA by making single-stranded nicks across the HJ at symmetrical positions within the homologous arms, yielding a 5'-phosphate and a 3'-hydroxyl group; requires a central core of homology in the junction. The consensus cleavage sequence is 5'-(A/T)TT(C/G)-3'. Cleavage occurs on the 3'-side of the TT dinucleotide at the point of strand exchange. HJ branch migration catalyzed by RuvA-RuvB allows RuvC to scan DNA until it finds its consensus sequence, where it cleaves and resolves the cruciform DNA.</text>
</comment>
<comment type="catalytic activity">
    <reaction evidence="1">
        <text>Endonucleolytic cleavage at a junction such as a reciprocal single-stranded crossover between two homologous DNA duplexes (Holliday junction).</text>
        <dbReference type="EC" id="3.1.21.10"/>
    </reaction>
</comment>
<comment type="cofactor">
    <cofactor evidence="1">
        <name>Mg(2+)</name>
        <dbReference type="ChEBI" id="CHEBI:18420"/>
    </cofactor>
    <text evidence="1">Binds 2 Mg(2+) ion per subunit.</text>
</comment>
<comment type="subunit">
    <text evidence="1">Homodimer which binds Holliday junction (HJ) DNA. The HJ becomes 2-fold symmetrical on binding to RuvC with unstacked arms; it has a different conformation from HJ DNA in complex with RuvA. In the full resolvosome a probable DNA-RuvA(4)-RuvB(12)-RuvC(2) complex forms which resolves the HJ.</text>
</comment>
<comment type="subcellular location">
    <subcellularLocation>
        <location evidence="1">Cytoplasm</location>
    </subcellularLocation>
</comment>
<comment type="similarity">
    <text evidence="1">Belongs to the RuvC family.</text>
</comment>
<comment type="sequence caution" evidence="2">
    <conflict type="erroneous initiation">
        <sequence resource="EMBL-CDS" id="CAI08189"/>
    </conflict>
    <text>Extended N-terminus.</text>
</comment>
<reference key="1">
    <citation type="journal article" date="2005" name="Arch. Microbiol.">
        <title>The genome sequence of an anaerobic aromatic-degrading denitrifying bacterium, strain EbN1.</title>
        <authorList>
            <person name="Rabus R."/>
            <person name="Kube M."/>
            <person name="Heider J."/>
            <person name="Beck A."/>
            <person name="Heitmann K."/>
            <person name="Widdel F."/>
            <person name="Reinhardt R."/>
        </authorList>
    </citation>
    <scope>NUCLEOTIDE SEQUENCE [LARGE SCALE GENOMIC DNA]</scope>
    <source>
        <strain>DSM 19018 / LMG 30748 / EbN1</strain>
    </source>
</reference>
<name>RUVC_AROAE</name>
<evidence type="ECO:0000255" key="1">
    <source>
        <dbReference type="HAMAP-Rule" id="MF_00034"/>
    </source>
</evidence>
<evidence type="ECO:0000305" key="2"/>
<sequence>MKSASTVVATRILGLDPGLRITGFGVIDKLGNQLRYVASGCIRTRDGELPGRLKTLLDGVREVVAAYTPDQVAVEKVFVNVNPQSTLLLGQARGAVICGAVSCDLPVHEYTALQVKQAVVGYGKAAKEQVQHMVQRLLALDGCPSPDAADALACAICHAHGGQGTAGAFAGRRRAGRILVAPDPG</sequence>
<gene>
    <name evidence="1" type="primary">ruvC</name>
    <name type="ordered locus">AZOSEA20640</name>
    <name type="ORF">ebA3657</name>
</gene>